<keyword id="KW-0066">ATP synthesis</keyword>
<keyword id="KW-1003">Cell membrane</keyword>
<keyword id="KW-0138">CF(0)</keyword>
<keyword id="KW-0375">Hydrogen ion transport</keyword>
<keyword id="KW-0406">Ion transport</keyword>
<keyword id="KW-0472">Membrane</keyword>
<keyword id="KW-0812">Transmembrane</keyword>
<keyword id="KW-1133">Transmembrane helix</keyword>
<keyword id="KW-0813">Transport</keyword>
<dbReference type="EMBL" id="AE015929">
    <property type="protein sequence ID" value="AAO05305.1"/>
    <property type="molecule type" value="Genomic_DNA"/>
</dbReference>
<dbReference type="RefSeq" id="NP_765261.1">
    <property type="nucleotide sequence ID" value="NC_004461.1"/>
</dbReference>
<dbReference type="RefSeq" id="WP_001829936.1">
    <property type="nucleotide sequence ID" value="NZ_WBME01000021.1"/>
</dbReference>
<dbReference type="SMR" id="Q8CNJ1"/>
<dbReference type="GeneID" id="50018193"/>
<dbReference type="KEGG" id="sep:SE_1706"/>
<dbReference type="PATRIC" id="fig|176280.10.peg.1667"/>
<dbReference type="eggNOG" id="COG0356">
    <property type="taxonomic scope" value="Bacteria"/>
</dbReference>
<dbReference type="HOGENOM" id="CLU_041018_2_3_9"/>
<dbReference type="OrthoDB" id="9789241at2"/>
<dbReference type="Proteomes" id="UP000001411">
    <property type="component" value="Chromosome"/>
</dbReference>
<dbReference type="GO" id="GO:0005886">
    <property type="term" value="C:plasma membrane"/>
    <property type="evidence" value="ECO:0007669"/>
    <property type="project" value="UniProtKB-SubCell"/>
</dbReference>
<dbReference type="GO" id="GO:0045259">
    <property type="term" value="C:proton-transporting ATP synthase complex"/>
    <property type="evidence" value="ECO:0007669"/>
    <property type="project" value="UniProtKB-KW"/>
</dbReference>
<dbReference type="GO" id="GO:0046933">
    <property type="term" value="F:proton-transporting ATP synthase activity, rotational mechanism"/>
    <property type="evidence" value="ECO:0007669"/>
    <property type="project" value="UniProtKB-UniRule"/>
</dbReference>
<dbReference type="GO" id="GO:0042777">
    <property type="term" value="P:proton motive force-driven plasma membrane ATP synthesis"/>
    <property type="evidence" value="ECO:0007669"/>
    <property type="project" value="TreeGrafter"/>
</dbReference>
<dbReference type="CDD" id="cd00310">
    <property type="entry name" value="ATP-synt_Fo_a_6"/>
    <property type="match status" value="1"/>
</dbReference>
<dbReference type="FunFam" id="1.20.120.220:FF:000005">
    <property type="entry name" value="ATP synthase subunit a"/>
    <property type="match status" value="1"/>
</dbReference>
<dbReference type="Gene3D" id="1.20.120.220">
    <property type="entry name" value="ATP synthase, F0 complex, subunit A"/>
    <property type="match status" value="1"/>
</dbReference>
<dbReference type="HAMAP" id="MF_01393">
    <property type="entry name" value="ATP_synth_a_bact"/>
    <property type="match status" value="1"/>
</dbReference>
<dbReference type="InterPro" id="IPR045082">
    <property type="entry name" value="ATP_syn_F0_a_bact/chloroplast"/>
</dbReference>
<dbReference type="InterPro" id="IPR000568">
    <property type="entry name" value="ATP_synth_F0_asu"/>
</dbReference>
<dbReference type="InterPro" id="IPR023011">
    <property type="entry name" value="ATP_synth_F0_asu_AS"/>
</dbReference>
<dbReference type="InterPro" id="IPR035908">
    <property type="entry name" value="F0_ATP_A_sf"/>
</dbReference>
<dbReference type="NCBIfam" id="TIGR01131">
    <property type="entry name" value="ATP_synt_6_or_A"/>
    <property type="match status" value="1"/>
</dbReference>
<dbReference type="NCBIfam" id="NF004479">
    <property type="entry name" value="PRK05815.1-4"/>
    <property type="match status" value="1"/>
</dbReference>
<dbReference type="PANTHER" id="PTHR42823">
    <property type="entry name" value="ATP SYNTHASE SUBUNIT A, CHLOROPLASTIC"/>
    <property type="match status" value="1"/>
</dbReference>
<dbReference type="PANTHER" id="PTHR42823:SF3">
    <property type="entry name" value="ATP SYNTHASE SUBUNIT A, CHLOROPLASTIC"/>
    <property type="match status" value="1"/>
</dbReference>
<dbReference type="Pfam" id="PF00119">
    <property type="entry name" value="ATP-synt_A"/>
    <property type="match status" value="1"/>
</dbReference>
<dbReference type="PRINTS" id="PR00123">
    <property type="entry name" value="ATPASEA"/>
</dbReference>
<dbReference type="SUPFAM" id="SSF81336">
    <property type="entry name" value="F1F0 ATP synthase subunit A"/>
    <property type="match status" value="1"/>
</dbReference>
<dbReference type="PROSITE" id="PS00449">
    <property type="entry name" value="ATPASE_A"/>
    <property type="match status" value="1"/>
</dbReference>
<name>ATP6_STAES</name>
<gene>
    <name evidence="1" type="primary">atpB</name>
    <name type="ordered locus">SE_1706</name>
</gene>
<comment type="function">
    <text evidence="1">Key component of the proton channel; it plays a direct role in the translocation of protons across the membrane.</text>
</comment>
<comment type="subunit">
    <text evidence="1">F-type ATPases have 2 components, CF(1) - the catalytic core - and CF(0) - the membrane proton channel. CF(1) has five subunits: alpha(3), beta(3), gamma(1), delta(1), epsilon(1). CF(0) has three main subunits: a(1), b(2) and c(9-12). The alpha and beta chains form an alternating ring which encloses part of the gamma chain. CF(1) is attached to CF(0) by a central stalk formed by the gamma and epsilon chains, while a peripheral stalk is formed by the delta and b chains.</text>
</comment>
<comment type="subcellular location">
    <subcellularLocation>
        <location evidence="1">Cell membrane</location>
        <topology evidence="1">Multi-pass membrane protein</topology>
    </subcellularLocation>
</comment>
<comment type="similarity">
    <text evidence="1">Belongs to the ATPase A chain family.</text>
</comment>
<sequence length="242" mass="27343">MDHKSPLVSWNVFGFDIVFNLASVLMVVITAILVFILAIVCTRNLKKRPTGKQNFIEWVFDFVRGIIESNMAWKKGGNFHFLAVTLILFIFVANMLGLPFAIVTHDHTLWWKSPTADATVTLTLSTTMILLTHYYGIKMRGTKAYAAGYFKPFWPLAIINVFEEFTSTLTLGLRLYGNIFAGELLLGLLASLFFEQPAWGWIISIPGLIVWQAFSIFVGTIQAYIFVMLSMVYMSHKVADGH</sequence>
<reference key="1">
    <citation type="journal article" date="2003" name="Mol. Microbiol.">
        <title>Genome-based analysis of virulence genes in a non-biofilm-forming Staphylococcus epidermidis strain (ATCC 12228).</title>
        <authorList>
            <person name="Zhang Y.-Q."/>
            <person name="Ren S.-X."/>
            <person name="Li H.-L."/>
            <person name="Wang Y.-X."/>
            <person name="Fu G."/>
            <person name="Yang J."/>
            <person name="Qin Z.-Q."/>
            <person name="Miao Y.-G."/>
            <person name="Wang W.-Y."/>
            <person name="Chen R.-S."/>
            <person name="Shen Y."/>
            <person name="Chen Z."/>
            <person name="Yuan Z.-H."/>
            <person name="Zhao G.-P."/>
            <person name="Qu D."/>
            <person name="Danchin A."/>
            <person name="Wen Y.-M."/>
        </authorList>
    </citation>
    <scope>NUCLEOTIDE SEQUENCE [LARGE SCALE GENOMIC DNA]</scope>
    <source>
        <strain>ATCC 12228 / FDA PCI 1200</strain>
    </source>
</reference>
<proteinExistence type="inferred from homology"/>
<accession>Q8CNJ1</accession>
<feature type="chain" id="PRO_1000145319" description="ATP synthase subunit a">
    <location>
        <begin position="1"/>
        <end position="242"/>
    </location>
</feature>
<feature type="transmembrane region" description="Helical" evidence="1">
    <location>
        <begin position="21"/>
        <end position="41"/>
    </location>
</feature>
<feature type="transmembrane region" description="Helical" evidence="1">
    <location>
        <begin position="83"/>
        <end position="103"/>
    </location>
</feature>
<feature type="transmembrane region" description="Helical" evidence="1">
    <location>
        <begin position="118"/>
        <end position="137"/>
    </location>
</feature>
<feature type="transmembrane region" description="Helical" evidence="1">
    <location>
        <begin position="175"/>
        <end position="195"/>
    </location>
</feature>
<feature type="transmembrane region" description="Helical" evidence="1">
    <location>
        <begin position="198"/>
        <end position="218"/>
    </location>
</feature>
<protein>
    <recommendedName>
        <fullName evidence="1">ATP synthase subunit a</fullName>
    </recommendedName>
    <alternativeName>
        <fullName evidence="1">ATP synthase F0 sector subunit a</fullName>
    </alternativeName>
    <alternativeName>
        <fullName evidence="1">F-ATPase subunit 6</fullName>
    </alternativeName>
</protein>
<organism>
    <name type="scientific">Staphylococcus epidermidis (strain ATCC 12228 / FDA PCI 1200)</name>
    <dbReference type="NCBI Taxonomy" id="176280"/>
    <lineage>
        <taxon>Bacteria</taxon>
        <taxon>Bacillati</taxon>
        <taxon>Bacillota</taxon>
        <taxon>Bacilli</taxon>
        <taxon>Bacillales</taxon>
        <taxon>Staphylococcaceae</taxon>
        <taxon>Staphylococcus</taxon>
    </lineage>
</organism>
<evidence type="ECO:0000255" key="1">
    <source>
        <dbReference type="HAMAP-Rule" id="MF_01393"/>
    </source>
</evidence>